<gene>
    <name type="primary">OST6</name>
    <name type="ordered locus">YML019W</name>
</gene>
<comment type="function">
    <text evidence="5 10">Subunit of the oligosaccharyl transferase (OST) complex that catalyzes the initial transfer of a defined glycan (Glc(3)Man(9)GlcNAc(2) in eukaryotes) from the lipid carrier dolichol-pyrophosphate to an asparagine residue within an Asn-X-Ser/Thr consensus motif in nascent polypeptide chains, the first step in protein N-glycosylation. N-glycosylation occurs cotranslationally and the complex associates with the Sec61 complex at the channel-forming translocon complex that mediates protein translocation across the endoplasmic reticulum (ER). All subunits are required for a maximal enzyme activity (PubMed:11580295). Can participate in redox reactions and is able to catalyze dithiol-disulfide exchange reactions with other proteins, albeit with relatively low efficiency. May form transient disulfide bonds with nascent polypeptides in the endoplasmic reticulum and thereby promote efficient glycosylation (PubMed:19549845).</text>
</comment>
<comment type="biophysicochemical properties">
    <redoxPotential>
        <text evidence="10">E(0) is -275 mV.</text>
    </redoxPotential>
</comment>
<comment type="pathway">
    <text evidence="12">Protein modification; protein glycosylation.</text>
</comment>
<comment type="subunit">
    <text evidence="2 4 7 8 9">Component of the oligosaccharyltransferase (OST) complex, which appears to exist in two assemblies comprising OST1, OST2, OST4, OST5, STT3, SWP1, WPB1, and either OST3 or OST6 (PubMed:10358084, PubMed:15886282, PubMed:16096345, PubMed:16297388). OST assembly occurs through the formation of 3 subcomplexes. Subcomplex 1 contains OST1 and OST5, subcomplex 2 contains STT3, OST3, and OST4, and subcomplex 3 contains OST2, WBP1, and SWP1 (By similarity).</text>
</comment>
<comment type="subcellular location">
    <subcellularLocation>
        <location evidence="11">Endoplasmic reticulum membrane</location>
        <topology evidence="3">Multi-pass membrane protein</topology>
    </subcellularLocation>
</comment>
<comment type="miscellaneous">
    <text evidence="6">Present with 1080 molecules/cell in log phase SD medium.</text>
</comment>
<comment type="similarity">
    <text evidence="11">Belongs to the OST3/OST6 family.</text>
</comment>
<sequence length="332" mass="37891">MKWCSTYIIIWLAIIFHKFQKSTATASHNIDDILQLKDDTGVITVTADNYPLLSRGVPGYFNILYITMRGTNSNGMSCQLCHDFEKTYHAVADVIRSQAPQSLNLFFTVDVNEVPQLVKDLKLQNVPHLVVYPPAESNKQSQFEWKTSPFYQYSLVPENAENTLQFGDFLAKILNISITVPQAFNVQEFVYYFVACMVVFIFIKKVILPKVTNKWKLFSMILSLGILLPSITGYKFVEMNAIPFIARDAKNRIMYFSGGSGWQFGIEIFSVSLMYIVMSALSVLLIYVPKISCVSEKMRGLLSSFLACVLFYFFSYFISCYLIKNPGYPIVF</sequence>
<proteinExistence type="evidence at protein level"/>
<accession>Q03723</accession>
<accession>D6VZF5</accession>
<accession>E9P904</accession>
<reference key="1">
    <citation type="journal article" date="1999" name="J. Biol. Chem.">
        <title>The oligosaccharyltransferase complex from Saccharomyces cerevisiae. Isolation of the OST6 gene, its synthetic interaction with OST3, and analysis of the native complex.</title>
        <authorList>
            <person name="Knauer R."/>
            <person name="Lehle L."/>
        </authorList>
    </citation>
    <scope>NUCLEOTIDE SEQUENCE [GENOMIC DNA]</scope>
    <scope>IDENTIFICATION IN THE OLIGOSACCHARYL TRANSFERASE COMPLEX</scope>
</reference>
<reference key="2">
    <citation type="journal article" date="1997" name="Nature">
        <title>The nucleotide sequence of Saccharomyces cerevisiae chromosome XIII.</title>
        <authorList>
            <person name="Bowman S."/>
            <person name="Churcher C.M."/>
            <person name="Badcock K."/>
            <person name="Brown D."/>
            <person name="Chillingworth T."/>
            <person name="Connor R."/>
            <person name="Dedman K."/>
            <person name="Devlin K."/>
            <person name="Gentles S."/>
            <person name="Hamlin N."/>
            <person name="Hunt S."/>
            <person name="Jagels K."/>
            <person name="Lye G."/>
            <person name="Moule S."/>
            <person name="Odell C."/>
            <person name="Pearson D."/>
            <person name="Rajandream M.A."/>
            <person name="Rice P."/>
            <person name="Skelton J."/>
            <person name="Walsh S.V."/>
            <person name="Whitehead S."/>
            <person name="Barrell B.G."/>
        </authorList>
    </citation>
    <scope>NUCLEOTIDE SEQUENCE [LARGE SCALE GENOMIC DNA]</scope>
    <source>
        <strain>ATCC 204508 / S288c</strain>
    </source>
</reference>
<reference key="3">
    <citation type="journal article" date="2014" name="G3 (Bethesda)">
        <title>The reference genome sequence of Saccharomyces cerevisiae: Then and now.</title>
        <authorList>
            <person name="Engel S.R."/>
            <person name="Dietrich F.S."/>
            <person name="Fisk D.G."/>
            <person name="Binkley G."/>
            <person name="Balakrishnan R."/>
            <person name="Costanzo M.C."/>
            <person name="Dwight S.S."/>
            <person name="Hitz B.C."/>
            <person name="Karra K."/>
            <person name="Nash R.S."/>
            <person name="Weng S."/>
            <person name="Wong E.D."/>
            <person name="Lloyd P."/>
            <person name="Skrzypek M.S."/>
            <person name="Miyasato S.R."/>
            <person name="Simison M."/>
            <person name="Cherry J.M."/>
        </authorList>
    </citation>
    <scope>GENOME REANNOTATION</scope>
    <source>
        <strain>ATCC 204508 / S288c</strain>
    </source>
</reference>
<reference key="4">
    <citation type="journal article" date="2007" name="Genome Res.">
        <title>Approaching a complete repository of sequence-verified protein-encoding clones for Saccharomyces cerevisiae.</title>
        <authorList>
            <person name="Hu Y."/>
            <person name="Rolfs A."/>
            <person name="Bhullar B."/>
            <person name="Murthy T.V.S."/>
            <person name="Zhu C."/>
            <person name="Berger M.F."/>
            <person name="Camargo A.A."/>
            <person name="Kelley F."/>
            <person name="McCarron S."/>
            <person name="Jepson D."/>
            <person name="Richardson A."/>
            <person name="Raphael J."/>
            <person name="Moreira D."/>
            <person name="Taycher E."/>
            <person name="Zuo D."/>
            <person name="Mohr S."/>
            <person name="Kane M.F."/>
            <person name="Williamson J."/>
            <person name="Simpson A.J.G."/>
            <person name="Bulyk M.L."/>
            <person name="Harlow E."/>
            <person name="Marsischky G."/>
            <person name="Kolodner R.D."/>
            <person name="LaBaer J."/>
        </authorList>
    </citation>
    <scope>NUCLEOTIDE SEQUENCE [GENOMIC DNA]</scope>
    <source>
        <strain>ATCC 204508 / S288c</strain>
    </source>
</reference>
<reference key="5">
    <citation type="journal article" date="1999" name="Biochim. Biophys. Acta">
        <title>The oligosaccharyltransferase complex from yeast.</title>
        <authorList>
            <person name="Knauer R."/>
            <person name="Lehle L."/>
        </authorList>
    </citation>
    <scope>REVIEW ON OLIGOSACCHARYL TRANSFERASE</scope>
</reference>
<reference key="6">
    <citation type="journal article" date="2001" name="Biochemistry">
        <title>Allosteric regulation provides a molecular mechanism for preferential utilization of the fully assembled dolichol-linked oligosaccharide by the yeast oligosaccharyltransferase.</title>
        <authorList>
            <person name="Karaoglu D."/>
            <person name="Kelleher D.J."/>
            <person name="Gilmore R."/>
        </authorList>
    </citation>
    <scope>FUNCTION</scope>
</reference>
<reference key="7">
    <citation type="journal article" date="2003" name="Nature">
        <title>Global analysis of protein expression in yeast.</title>
        <authorList>
            <person name="Ghaemmaghami S."/>
            <person name="Huh W.-K."/>
            <person name="Bower K."/>
            <person name="Howson R.W."/>
            <person name="Belle A."/>
            <person name="Dephoure N."/>
            <person name="O'Shea E.K."/>
            <person name="Weissman J.S."/>
        </authorList>
    </citation>
    <scope>LEVEL OF PROTEIN EXPRESSION [LARGE SCALE ANALYSIS]</scope>
</reference>
<reference key="8">
    <citation type="journal article" date="2005" name="FEBS Lett.">
        <title>Yeast oligosaccharyltransferase consists of two functionally distinct sub-complexes, specified by either the Ost3p or Ost6p subunit.</title>
        <authorList>
            <person name="Schwarz M."/>
            <person name="Knauer R."/>
            <person name="Lehle L."/>
        </authorList>
    </citation>
    <scope>COMPOSITION OF OLIGOSACCHARYL TRANSFERASE COMPLEXES</scope>
</reference>
<reference key="9">
    <citation type="journal article" date="2005" name="Glycobiology">
        <title>The 3.4-kDa Ost4 protein is required for the assembly of two distinct oligosaccharyltransferase complexes in yeast.</title>
        <authorList>
            <person name="Spirig U."/>
            <person name="Bodmer D."/>
            <person name="Wacker M."/>
            <person name="Burda P."/>
            <person name="Aebi M."/>
        </authorList>
    </citation>
    <scope>COMPOSITION OF OLIGOSACCHARYL TRANSFERASE COMPLEXES</scope>
</reference>
<reference key="10">
    <citation type="journal article" date="2005" name="Glycobiology">
        <title>Two oligosaccharyl transferase complexes exist in yeast and associate with two different translocons.</title>
        <authorList>
            <person name="Yan A."/>
            <person name="Lennarz W.J."/>
        </authorList>
    </citation>
    <scope>COMPOSITION OF OLIGOSACCHARYL TRANSFERASE COMPLEXES</scope>
</reference>
<reference key="11">
    <citation type="journal article" date="2005" name="Proc. Natl. Acad. Sci. U.S.A.">
        <title>Studies of yeast oligosaccharyl transferase subunits using the split-ubiquitin system: topological features and in vivo interactions.</title>
        <authorList>
            <person name="Yan A."/>
            <person name="Wu E."/>
            <person name="Lennarz W.J."/>
        </authorList>
    </citation>
    <scope>TOPOLOGY</scope>
    <scope>INTERACTION WITH OST1; OST2; OST4; STT3; WBP1 AND SWP1</scope>
</reference>
<reference key="12">
    <citation type="journal article" date="2009" name="Proc. Natl. Acad. Sci. U.S.A.">
        <title>Oxidoreductase activity of oligosaccharyltransferase subunits Ost3p and Ost6p defines site-specific glycosylation efficiency.</title>
        <authorList>
            <person name="Schulz B.L."/>
            <person name="Stirnimann C.U."/>
            <person name="Grimshaw J.P."/>
            <person name="Brozzo M.S."/>
            <person name="Fritsch F."/>
            <person name="Mohorko E."/>
            <person name="Capitani G."/>
            <person name="Glockshuber R."/>
            <person name="Grutter M.G."/>
            <person name="Aebi M."/>
        </authorList>
    </citation>
    <scope>X-RAY CRYSTALLOGRAPHY (1.3 ANGSTROMS) OF 24-188</scope>
    <scope>FUNCTION</scope>
    <scope>BIOPHYSICOCHEMICAL PROPERTIES</scope>
    <scope>REDOX POTENTIAL</scope>
    <scope>MUTAGENESIS OF CYS-78 AND CYS-81</scope>
</reference>
<organism>
    <name type="scientific">Saccharomyces cerevisiae (strain ATCC 204508 / S288c)</name>
    <name type="common">Baker's yeast</name>
    <dbReference type="NCBI Taxonomy" id="559292"/>
    <lineage>
        <taxon>Eukaryota</taxon>
        <taxon>Fungi</taxon>
        <taxon>Dikarya</taxon>
        <taxon>Ascomycota</taxon>
        <taxon>Saccharomycotina</taxon>
        <taxon>Saccharomycetes</taxon>
        <taxon>Saccharomycetales</taxon>
        <taxon>Saccharomycetaceae</taxon>
        <taxon>Saccharomyces</taxon>
    </lineage>
</organism>
<evidence type="ECO:0000250" key="1"/>
<evidence type="ECO:0000250" key="2">
    <source>
        <dbReference type="UniProtKB" id="P48439"/>
    </source>
</evidence>
<evidence type="ECO:0000255" key="3"/>
<evidence type="ECO:0000269" key="4">
    <source>
    </source>
</evidence>
<evidence type="ECO:0000269" key="5">
    <source>
    </source>
</evidence>
<evidence type="ECO:0000269" key="6">
    <source>
    </source>
</evidence>
<evidence type="ECO:0000269" key="7">
    <source>
    </source>
</evidence>
<evidence type="ECO:0000269" key="8">
    <source>
    </source>
</evidence>
<evidence type="ECO:0000269" key="9">
    <source>
    </source>
</evidence>
<evidence type="ECO:0000269" key="10">
    <source>
    </source>
</evidence>
<evidence type="ECO:0000305" key="11"/>
<evidence type="ECO:0000305" key="12">
    <source>
    </source>
</evidence>
<evidence type="ECO:0007829" key="13">
    <source>
        <dbReference type="PDB" id="3GA4"/>
    </source>
</evidence>
<evidence type="ECO:0007829" key="14">
    <source>
        <dbReference type="PDB" id="7OCI"/>
    </source>
</evidence>
<feature type="signal peptide" evidence="3">
    <location>
        <begin position="1"/>
        <end position="24"/>
    </location>
</feature>
<feature type="chain" id="PRO_0000058098" description="Dolichyl-diphosphooligosaccharide--protein glycosyltransferase subunit OST6">
    <location>
        <begin position="25"/>
        <end position="332"/>
    </location>
</feature>
<feature type="topological domain" description="Lumenal" evidence="11">
    <location>
        <begin position="25"/>
        <end position="188"/>
    </location>
</feature>
<feature type="transmembrane region" description="Helical" evidence="3">
    <location>
        <begin position="189"/>
        <end position="209"/>
    </location>
</feature>
<feature type="topological domain" description="Cytoplasmic" evidence="11">
    <location>
        <begin position="210"/>
        <end position="216"/>
    </location>
</feature>
<feature type="transmembrane region" description="Helical" evidence="3">
    <location>
        <begin position="217"/>
        <end position="237"/>
    </location>
</feature>
<feature type="topological domain" description="Lumenal" evidence="11">
    <location>
        <begin position="238"/>
        <end position="267"/>
    </location>
</feature>
<feature type="transmembrane region" description="Helical" evidence="3">
    <location>
        <begin position="268"/>
        <end position="288"/>
    </location>
</feature>
<feature type="topological domain" description="Cytoplasmic" evidence="11">
    <location>
        <begin position="289"/>
        <end position="302"/>
    </location>
</feature>
<feature type="transmembrane region" description="Helical" evidence="3">
    <location>
        <begin position="303"/>
        <end position="323"/>
    </location>
</feature>
<feature type="topological domain" description="Lumenal" evidence="11">
    <location>
        <begin position="324"/>
        <end position="332"/>
    </location>
</feature>
<feature type="domain" description="Thioredoxin">
    <location>
        <begin position="35"/>
        <end position="162"/>
    </location>
</feature>
<feature type="disulfide bond" description="Redox-active" evidence="1">
    <location>
        <begin position="78"/>
        <end position="81"/>
    </location>
</feature>
<feature type="mutagenesis site" description="Alters glycosyltransferase efficiency towards a subset of target proteins; when associated with S-81." evidence="10">
    <original>C</original>
    <variation>S</variation>
    <location>
        <position position="78"/>
    </location>
</feature>
<feature type="mutagenesis site" description="Alters glycosyltransferase efficiency towards a subset of target proteins; when associated with S-78." evidence="10">
    <original>C</original>
    <variation>S</variation>
    <location>
        <position position="81"/>
    </location>
</feature>
<feature type="sequence conflict" description="In Ref. 4; AAT92993." evidence="11" ref="4">
    <original>I</original>
    <variation>T</variation>
    <location>
        <position position="33"/>
    </location>
</feature>
<feature type="helix" evidence="13">
    <location>
        <begin position="31"/>
        <end position="34"/>
    </location>
</feature>
<feature type="strand" evidence="13">
    <location>
        <begin position="41"/>
        <end position="44"/>
    </location>
</feature>
<feature type="turn" evidence="13">
    <location>
        <begin position="47"/>
        <end position="49"/>
    </location>
</feature>
<feature type="helix" evidence="13">
    <location>
        <begin position="50"/>
        <end position="53"/>
    </location>
</feature>
<feature type="strand" evidence="13">
    <location>
        <begin position="61"/>
        <end position="67"/>
    </location>
</feature>
<feature type="helix" evidence="13">
    <location>
        <begin position="79"/>
        <end position="98"/>
    </location>
</feature>
<feature type="strand" evidence="13">
    <location>
        <begin position="104"/>
        <end position="110"/>
    </location>
</feature>
<feature type="turn" evidence="13">
    <location>
        <begin position="111"/>
        <end position="113"/>
    </location>
</feature>
<feature type="helix" evidence="13">
    <location>
        <begin position="115"/>
        <end position="120"/>
    </location>
</feature>
<feature type="strand" evidence="13">
    <location>
        <begin position="128"/>
        <end position="132"/>
    </location>
</feature>
<feature type="helix" evidence="13">
    <location>
        <begin position="137"/>
        <end position="142"/>
    </location>
</feature>
<feature type="turn" evidence="13">
    <location>
        <begin position="145"/>
        <end position="147"/>
    </location>
</feature>
<feature type="strand" evidence="13">
    <location>
        <begin position="151"/>
        <end position="153"/>
    </location>
</feature>
<feature type="helix" evidence="13">
    <location>
        <begin position="157"/>
        <end position="159"/>
    </location>
</feature>
<feature type="helix" evidence="13">
    <location>
        <begin position="163"/>
        <end position="174"/>
    </location>
</feature>
<feature type="helix" evidence="14">
    <location>
        <begin position="216"/>
        <end position="231"/>
    </location>
</feature>
<feature type="helix" evidence="14">
    <location>
        <begin position="234"/>
        <end position="239"/>
    </location>
</feature>
<feature type="strand" evidence="14">
    <location>
        <begin position="244"/>
        <end position="247"/>
    </location>
</feature>
<feature type="strand" evidence="14">
    <location>
        <begin position="258"/>
        <end position="261"/>
    </location>
</feature>
<feature type="helix" evidence="14">
    <location>
        <begin position="265"/>
        <end position="287"/>
    </location>
</feature>
<feature type="helix" evidence="14">
    <location>
        <begin position="288"/>
        <end position="290"/>
    </location>
</feature>
<feature type="helix" evidence="14">
    <location>
        <begin position="296"/>
        <end position="324"/>
    </location>
</feature>
<name>OST6_YEAST</name>
<protein>
    <recommendedName>
        <fullName>Dolichyl-diphosphooligosaccharide--protein glycosyltransferase subunit OST6</fullName>
        <shortName>Oligosaccharyl transferase subunit OST6</shortName>
    </recommendedName>
    <alternativeName>
        <fullName>Oligosaccharyl transferase 37 kDa subunit</fullName>
        <shortName>OTase 37 kDa subunit</shortName>
    </alternativeName>
</protein>
<keyword id="KW-0002">3D-structure</keyword>
<keyword id="KW-1015">Disulfide bond</keyword>
<keyword id="KW-0256">Endoplasmic reticulum</keyword>
<keyword id="KW-0472">Membrane</keyword>
<keyword id="KW-1185">Reference proteome</keyword>
<keyword id="KW-0732">Signal</keyword>
<keyword id="KW-0812">Transmembrane</keyword>
<keyword id="KW-1133">Transmembrane helix</keyword>
<dbReference type="EMBL" id="Y08606">
    <property type="protein sequence ID" value="CAA69898.1"/>
    <property type="molecule type" value="Genomic_DNA"/>
</dbReference>
<dbReference type="EMBL" id="Z46659">
    <property type="protein sequence ID" value="CAA86636.1"/>
    <property type="molecule type" value="Genomic_DNA"/>
</dbReference>
<dbReference type="EMBL" id="AY692974">
    <property type="protein sequence ID" value="AAT92993.1"/>
    <property type="molecule type" value="Genomic_DNA"/>
</dbReference>
<dbReference type="EMBL" id="BK006946">
    <property type="protein sequence ID" value="DAA09879.1"/>
    <property type="molecule type" value="Genomic_DNA"/>
</dbReference>
<dbReference type="PIR" id="S49758">
    <property type="entry name" value="S49758"/>
</dbReference>
<dbReference type="RefSeq" id="NP_013693.1">
    <property type="nucleotide sequence ID" value="NM_001182377.1"/>
</dbReference>
<dbReference type="PDB" id="3G7Y">
    <property type="method" value="X-ray"/>
    <property type="resolution" value="2.21 A"/>
    <property type="chains" value="A=24-188"/>
</dbReference>
<dbReference type="PDB" id="3G9B">
    <property type="method" value="X-ray"/>
    <property type="resolution" value="1.96 A"/>
    <property type="chains" value="A=24-188"/>
</dbReference>
<dbReference type="PDB" id="3GA4">
    <property type="method" value="X-ray"/>
    <property type="resolution" value="1.30 A"/>
    <property type="chains" value="A=24-188"/>
</dbReference>
<dbReference type="PDB" id="7OCI">
    <property type="method" value="EM"/>
    <property type="resolution" value="3.46 A"/>
    <property type="chains" value="C=1-332"/>
</dbReference>
<dbReference type="PDBsum" id="3G7Y"/>
<dbReference type="PDBsum" id="3G9B"/>
<dbReference type="PDBsum" id="3GA4"/>
<dbReference type="PDBsum" id="7OCI"/>
<dbReference type="EMDB" id="EMD-12808"/>
<dbReference type="SMR" id="Q03723"/>
<dbReference type="BioGRID" id="35150">
    <property type="interactions" value="171"/>
</dbReference>
<dbReference type="ComplexPortal" id="CPX-1638">
    <property type="entry name" value="Oligosaccharyltransferase complex, OST6 variant"/>
</dbReference>
<dbReference type="DIP" id="DIP-3851N"/>
<dbReference type="FunCoup" id="Q03723">
    <property type="interactions" value="162"/>
</dbReference>
<dbReference type="IntAct" id="Q03723">
    <property type="interactions" value="7"/>
</dbReference>
<dbReference type="STRING" id="4932.YML019W"/>
<dbReference type="PaxDb" id="4932-YML019W"/>
<dbReference type="PeptideAtlas" id="Q03723"/>
<dbReference type="DNASU" id="854989"/>
<dbReference type="EnsemblFungi" id="YML019W_mRNA">
    <property type="protein sequence ID" value="YML019W"/>
    <property type="gene ID" value="YML019W"/>
</dbReference>
<dbReference type="GeneID" id="854989"/>
<dbReference type="KEGG" id="sce:YML019W"/>
<dbReference type="AGR" id="SGD:S000004481"/>
<dbReference type="SGD" id="S000004481">
    <property type="gene designation" value="OST6"/>
</dbReference>
<dbReference type="VEuPathDB" id="FungiDB:YML019W"/>
<dbReference type="eggNOG" id="KOG2603">
    <property type="taxonomic scope" value="Eukaryota"/>
</dbReference>
<dbReference type="GeneTree" id="ENSGT00390000012030"/>
<dbReference type="HOGENOM" id="CLU_052855_2_1_1"/>
<dbReference type="InParanoid" id="Q03723"/>
<dbReference type="OMA" id="WQFGIEI"/>
<dbReference type="OrthoDB" id="67566at2759"/>
<dbReference type="BioCyc" id="MetaCyc:YML019W-MONOMER"/>
<dbReference type="BioCyc" id="YEAST:YML019W-MONOMER"/>
<dbReference type="BRENDA" id="2.4.99.18">
    <property type="organism ID" value="984"/>
</dbReference>
<dbReference type="Reactome" id="R-SCE-5223345">
    <property type="pathway name" value="Miscellaneous transport and binding events"/>
</dbReference>
<dbReference type="Reactome" id="R-SCE-6798695">
    <property type="pathway name" value="Neutrophil degranulation"/>
</dbReference>
<dbReference type="UniPathway" id="UPA00378"/>
<dbReference type="BioGRID-ORCS" id="854989">
    <property type="hits" value="0 hits in 10 CRISPR screens"/>
</dbReference>
<dbReference type="EvolutionaryTrace" id="Q03723"/>
<dbReference type="PRO" id="PR:Q03723"/>
<dbReference type="Proteomes" id="UP000002311">
    <property type="component" value="Chromosome XIII"/>
</dbReference>
<dbReference type="RNAct" id="Q03723">
    <property type="molecule type" value="protein"/>
</dbReference>
<dbReference type="GO" id="GO:0005783">
    <property type="term" value="C:endoplasmic reticulum"/>
    <property type="evidence" value="ECO:0007005"/>
    <property type="project" value="SGD"/>
</dbReference>
<dbReference type="GO" id="GO:0005789">
    <property type="term" value="C:endoplasmic reticulum membrane"/>
    <property type="evidence" value="ECO:0000303"/>
    <property type="project" value="ComplexPortal"/>
</dbReference>
<dbReference type="GO" id="GO:0008250">
    <property type="term" value="C:oligosaccharyltransferase complex"/>
    <property type="evidence" value="ECO:0000314"/>
    <property type="project" value="SGD"/>
</dbReference>
<dbReference type="GO" id="GO:0015035">
    <property type="term" value="F:protein-disulfide reductase activity"/>
    <property type="evidence" value="ECO:0000314"/>
    <property type="project" value="SGD"/>
</dbReference>
<dbReference type="GO" id="GO:0006487">
    <property type="term" value="P:protein N-linked glycosylation"/>
    <property type="evidence" value="ECO:0000316"/>
    <property type="project" value="SGD"/>
</dbReference>
<dbReference type="GO" id="GO:0018279">
    <property type="term" value="P:protein N-linked glycosylation via asparagine"/>
    <property type="evidence" value="ECO:0000318"/>
    <property type="project" value="GO_Central"/>
</dbReference>
<dbReference type="Gene3D" id="3.40.30.10">
    <property type="entry name" value="Glutaredoxin"/>
    <property type="match status" value="1"/>
</dbReference>
<dbReference type="InterPro" id="IPR021149">
    <property type="entry name" value="OligosaccharylTrfase_OST3/OST6"/>
</dbReference>
<dbReference type="PANTHER" id="PTHR12692:SF3">
    <property type="entry name" value="DOLICHYL-DIPHOSPHOOLIGOSACCHARIDE--PROTEIN GLYCOSYLTRANSFERASE SUBUNIT OST6"/>
    <property type="match status" value="1"/>
</dbReference>
<dbReference type="PANTHER" id="PTHR12692">
    <property type="entry name" value="DOLICHYL-DIPHOSPHOOLIGOSACCHARIDE--PROTEIN GLYCOSYLTRANSFERASE-RELATED"/>
    <property type="match status" value="1"/>
</dbReference>
<dbReference type="Pfam" id="PF04756">
    <property type="entry name" value="OST3_OST6"/>
    <property type="match status" value="1"/>
</dbReference>